<feature type="chain" id="PRO_0000071771" description="V-type proton ATPase 16 kDa proteolipid subunit">
    <location>
        <begin position="1" status="less than"/>
        <end position="109"/>
    </location>
</feature>
<feature type="transmembrane region" description="Helical" evidence="2">
    <location>
        <begin position="1" status="less than"/>
        <end position="20"/>
    </location>
</feature>
<feature type="topological domain" description="Lumenal" evidence="2">
    <location>
        <begin position="21"/>
        <end position="39"/>
    </location>
</feature>
<feature type="transmembrane region" description="Helical" evidence="2">
    <location>
        <begin position="40"/>
        <end position="61"/>
    </location>
</feature>
<feature type="topological domain" description="Cytoplasmic" evidence="2">
    <location>
        <begin position="62"/>
        <end position="73"/>
    </location>
</feature>
<feature type="transmembrane region" description="Helical" evidence="2">
    <location>
        <begin position="74"/>
        <end position="99"/>
    </location>
</feature>
<feature type="topological domain" description="Lumenal" evidence="2">
    <location>
        <begin position="100"/>
        <end position="109"/>
    </location>
</feature>
<feature type="site" description="Essential for proton translocation" evidence="1">
    <location>
        <position position="86"/>
    </location>
</feature>
<feature type="sequence conflict" description="In Ref. 1; CAA63119/CAA63118." evidence="3" ref="1">
    <original>A</original>
    <variation>P</variation>
    <location>
        <position position="52"/>
    </location>
</feature>
<feature type="sequence conflict" description="In Ref. 1; CAA63119." evidence="3" ref="1">
    <original>A</original>
    <variation>G</variation>
    <location>
        <position position="63"/>
    </location>
</feature>
<feature type="non-terminal residue">
    <location>
        <position position="1"/>
    </location>
</feature>
<accession>Q41773</accession>
<accession>Q08074</accession>
<accession>Q41774</accession>
<name>VATL_MAIZE</name>
<protein>
    <recommendedName>
        <fullName>V-type proton ATPase 16 kDa proteolipid subunit</fullName>
        <shortName>V-ATPase 16 kDa proteolipid subunit</shortName>
    </recommendedName>
    <alternativeName>
        <fullName>Vacuolar proton pump 16 kDa proteolipid subunit</fullName>
    </alternativeName>
</protein>
<evidence type="ECO:0000250" key="1"/>
<evidence type="ECO:0000255" key="2"/>
<evidence type="ECO:0000305" key="3"/>
<organism>
    <name type="scientific">Zea mays</name>
    <name type="common">Maize</name>
    <dbReference type="NCBI Taxonomy" id="4577"/>
    <lineage>
        <taxon>Eukaryota</taxon>
        <taxon>Viridiplantae</taxon>
        <taxon>Streptophyta</taxon>
        <taxon>Embryophyta</taxon>
        <taxon>Tracheophyta</taxon>
        <taxon>Spermatophyta</taxon>
        <taxon>Magnoliopsida</taxon>
        <taxon>Liliopsida</taxon>
        <taxon>Poales</taxon>
        <taxon>Poaceae</taxon>
        <taxon>PACMAD clade</taxon>
        <taxon>Panicoideae</taxon>
        <taxon>Andropogonodae</taxon>
        <taxon>Andropogoneae</taxon>
        <taxon>Tripsacinae</taxon>
        <taxon>Zea</taxon>
    </lineage>
</organism>
<comment type="function">
    <text>Proton-conducting pore forming subunit of the membrane integral V0 complex of vacuolar ATPase. V-ATPase is responsible for acidifying a variety of intracellular compartments in eukaryotic cells.</text>
</comment>
<comment type="subunit">
    <text>V-ATPase is a heteromultimeric enzyme composed of a peripheral catalytic V1 complex (main components: subunits A, B, C, D, E, and F) attached to an integral membrane V0 proton pore complex (main component: the proteolipid protein; which is present as a hexamer that forms the proton-conducting pore).</text>
</comment>
<comment type="subcellular location">
    <subcellularLocation>
        <location>Vacuole membrane</location>
        <topology>Multi-pass membrane protein</topology>
    </subcellularLocation>
    <text>Tonoplast.</text>
</comment>
<comment type="tissue specificity">
    <text>High expression in the mesocotyl tip of etiolated seedlings compared to the base.</text>
</comment>
<comment type="developmental stage">
    <text>Expression is strongly linked to extension growth.</text>
</comment>
<comment type="similarity">
    <text evidence="3">Belongs to the V-ATPase proteolipid subunit family.</text>
</comment>
<proteinExistence type="evidence at transcript level"/>
<reference key="1">
    <citation type="journal article" date="1996" name="FEBS Lett.">
        <title>Down-regulation of plant V-type H+ -ATPase genes after light-induced inhibition of growth.</title>
        <authorList>
            <person name="Viereck R."/>
            <person name="Kirsch M."/>
            <person name="Loew R."/>
            <person name="Rausch T."/>
        </authorList>
    </citation>
    <scope>NUCLEOTIDE SEQUENCE [MRNA] OF 1-76</scope>
    <source>
        <strain>cv. Lixis</strain>
        <tissue>Coleoptile</tissue>
    </source>
</reference>
<reference key="2">
    <citation type="journal article" date="1993" name="Plant Physiol.">
        <title>Partial sequence analysis of 130 randomly selected maize cDNA clones.</title>
        <authorList>
            <person name="Keith C.S."/>
            <person name="Hoang D.O."/>
            <person name="Barrett B.M."/>
            <person name="Feigelman B."/>
            <person name="Nelson M.C."/>
            <person name="Thai H."/>
            <person name="Baysdorfer C."/>
        </authorList>
    </citation>
    <scope>NUCLEOTIDE SEQUENCE [MRNA] OF 52-109</scope>
    <source>
        <strain>cv. B73</strain>
        <tissue>Leaf</tissue>
    </source>
</reference>
<dbReference type="EMBL" id="X92375">
    <property type="protein sequence ID" value="CAA63119.1"/>
    <property type="molecule type" value="mRNA"/>
</dbReference>
<dbReference type="EMBL" id="X92374">
    <property type="protein sequence ID" value="CAA63118.1"/>
    <property type="molecule type" value="mRNA"/>
</dbReference>
<dbReference type="EMBL" id="M95063">
    <property type="protein sequence ID" value="AAA18550.1"/>
    <property type="molecule type" value="mRNA"/>
</dbReference>
<dbReference type="PIR" id="S65527">
    <property type="entry name" value="S65527"/>
</dbReference>
<dbReference type="SMR" id="Q41773"/>
<dbReference type="STRING" id="4577.Q41773"/>
<dbReference type="PaxDb" id="4577-AC216067.3_FGP002"/>
<dbReference type="eggNOG" id="KOG0232">
    <property type="taxonomic scope" value="Eukaryota"/>
</dbReference>
<dbReference type="InParanoid" id="Q41773"/>
<dbReference type="Proteomes" id="UP000007305">
    <property type="component" value="Unplaced"/>
</dbReference>
<dbReference type="ExpressionAtlas" id="Q41773">
    <property type="expression patterns" value="baseline and differential"/>
</dbReference>
<dbReference type="GO" id="GO:0033179">
    <property type="term" value="C:proton-transporting V-type ATPase, V0 domain"/>
    <property type="evidence" value="ECO:0007669"/>
    <property type="project" value="InterPro"/>
</dbReference>
<dbReference type="GO" id="GO:0005774">
    <property type="term" value="C:vacuolar membrane"/>
    <property type="evidence" value="ECO:0007669"/>
    <property type="project" value="UniProtKB-SubCell"/>
</dbReference>
<dbReference type="GO" id="GO:0046961">
    <property type="term" value="F:proton-transporting ATPase activity, rotational mechanism"/>
    <property type="evidence" value="ECO:0007669"/>
    <property type="project" value="InterPro"/>
</dbReference>
<dbReference type="CDD" id="cd18176">
    <property type="entry name" value="ATP-synt_Vo_c_ATP6C_rpt2"/>
    <property type="match status" value="1"/>
</dbReference>
<dbReference type="FunFam" id="1.20.120.610:FF:000009">
    <property type="entry name" value="V-type proton ATPase 16 kDa proteolipid subunit"/>
    <property type="match status" value="1"/>
</dbReference>
<dbReference type="Gene3D" id="1.20.120.610">
    <property type="entry name" value="lithium bound rotor ring of v- atpase"/>
    <property type="match status" value="1"/>
</dbReference>
<dbReference type="InterPro" id="IPR002379">
    <property type="entry name" value="ATPase_proteolipid_c-like_dom"/>
</dbReference>
<dbReference type="InterPro" id="IPR000245">
    <property type="entry name" value="ATPase_proteolipid_csu"/>
</dbReference>
<dbReference type="InterPro" id="IPR011555">
    <property type="entry name" value="ATPase_proteolipid_su_C_euk"/>
</dbReference>
<dbReference type="InterPro" id="IPR035921">
    <property type="entry name" value="F/V-ATP_Csub_sf"/>
</dbReference>
<dbReference type="NCBIfam" id="TIGR01100">
    <property type="entry name" value="V_ATP_synt_C"/>
    <property type="match status" value="1"/>
</dbReference>
<dbReference type="PANTHER" id="PTHR10263">
    <property type="entry name" value="V-TYPE PROTON ATPASE PROTEOLIPID SUBUNIT"/>
    <property type="match status" value="1"/>
</dbReference>
<dbReference type="Pfam" id="PF00137">
    <property type="entry name" value="ATP-synt_C"/>
    <property type="match status" value="1"/>
</dbReference>
<dbReference type="PRINTS" id="PR00122">
    <property type="entry name" value="VACATPASE"/>
</dbReference>
<dbReference type="SUPFAM" id="SSF81333">
    <property type="entry name" value="F1F0 ATP synthase subunit C"/>
    <property type="match status" value="1"/>
</dbReference>
<keyword id="KW-0375">Hydrogen ion transport</keyword>
<keyword id="KW-0406">Ion transport</keyword>
<keyword id="KW-0472">Membrane</keyword>
<keyword id="KW-1185">Reference proteome</keyword>
<keyword id="KW-0812">Transmembrane</keyword>
<keyword id="KW-1133">Transmembrane helix</keyword>
<keyword id="KW-0813">Transport</keyword>
<keyword id="KW-0926">Vacuole</keyword>
<sequence>VPVVMAGVLGIYGLIIAVIISTGINPKAKPYYLFDGYAHLSSGLACGLAGLAAGMAIGIVGDAGVRANAQQPKLFVGMILILIFAEALALYGLIVGIILSSRAGQSRAD</sequence>